<feature type="chain" id="PRO_0000109732" description="Glutamate 5-kinase">
    <location>
        <begin position="1"/>
        <end position="369"/>
    </location>
</feature>
<feature type="domain" description="PUA" evidence="1">
    <location>
        <begin position="275"/>
        <end position="355"/>
    </location>
</feature>
<feature type="binding site" evidence="1">
    <location>
        <position position="9"/>
    </location>
    <ligand>
        <name>ATP</name>
        <dbReference type="ChEBI" id="CHEBI:30616"/>
    </ligand>
</feature>
<feature type="binding site" evidence="1">
    <location>
        <position position="49"/>
    </location>
    <ligand>
        <name>substrate</name>
    </ligand>
</feature>
<feature type="binding site" evidence="1">
    <location>
        <position position="136"/>
    </location>
    <ligand>
        <name>substrate</name>
    </ligand>
</feature>
<feature type="binding site" evidence="1">
    <location>
        <position position="148"/>
    </location>
    <ligand>
        <name>substrate</name>
    </ligand>
</feature>
<feature type="binding site" evidence="1">
    <location>
        <begin position="168"/>
        <end position="169"/>
    </location>
    <ligand>
        <name>ATP</name>
        <dbReference type="ChEBI" id="CHEBI:30616"/>
    </ligand>
</feature>
<feature type="binding site" evidence="1">
    <location>
        <begin position="210"/>
        <end position="216"/>
    </location>
    <ligand>
        <name>ATP</name>
        <dbReference type="ChEBI" id="CHEBI:30616"/>
    </ligand>
</feature>
<name>PROB_STRPN</name>
<comment type="function">
    <text evidence="1">Catalyzes the transfer of a phosphate group to glutamate to form L-glutamate 5-phosphate.</text>
</comment>
<comment type="catalytic activity">
    <reaction evidence="1">
        <text>L-glutamate + ATP = L-glutamyl 5-phosphate + ADP</text>
        <dbReference type="Rhea" id="RHEA:14877"/>
        <dbReference type="ChEBI" id="CHEBI:29985"/>
        <dbReference type="ChEBI" id="CHEBI:30616"/>
        <dbReference type="ChEBI" id="CHEBI:58274"/>
        <dbReference type="ChEBI" id="CHEBI:456216"/>
        <dbReference type="EC" id="2.7.2.11"/>
    </reaction>
</comment>
<comment type="pathway">
    <text evidence="1">Amino-acid biosynthesis; L-proline biosynthesis; L-glutamate 5-semialdehyde from L-glutamate: step 1/2.</text>
</comment>
<comment type="subcellular location">
    <subcellularLocation>
        <location evidence="1">Cytoplasm</location>
    </subcellularLocation>
</comment>
<comment type="similarity">
    <text evidence="1">Belongs to the glutamate 5-kinase family.</text>
</comment>
<sequence length="369" mass="39927">MKYKRIVFKVGTSSLTNEDGSLSRSKVKDITQQLAMLHEAGHELILVSSGAIAAGFGALGFKKRPTKIADKQASAAVGQGLLLEEYTTNLLLRQIVSAQILLTQDDFVDKRRYKNAHQALSVLLNRGAIPIINENDSVVIDELKVGDNDTLSAQVAAMVQADLLVFLTDVDGLYTGNPNSDPRAKRLERIETINREIIDMAGGAGSSNGTGGMLTKIKAATIATESGVPVYICSSLKSDSMIEAAEETEDGSYFVAQEKGLRTQKQWLAFYAQSQGSIWVDKGAAEALSQYGKSLLLSGIVEAEGVFSYGDIVTVFDKESGKSLGKGRVQFGASALEDMLRSQKAKGVLIYRDDWISITPEIQLLFTEF</sequence>
<reference key="1">
    <citation type="journal article" date="2001" name="Science">
        <title>Complete genome sequence of a virulent isolate of Streptococcus pneumoniae.</title>
        <authorList>
            <person name="Tettelin H."/>
            <person name="Nelson K.E."/>
            <person name="Paulsen I.T."/>
            <person name="Eisen J.A."/>
            <person name="Read T.D."/>
            <person name="Peterson S.N."/>
            <person name="Heidelberg J.F."/>
            <person name="DeBoy R.T."/>
            <person name="Haft D.H."/>
            <person name="Dodson R.J."/>
            <person name="Durkin A.S."/>
            <person name="Gwinn M.L."/>
            <person name="Kolonay J.F."/>
            <person name="Nelson W.C."/>
            <person name="Peterson J.D."/>
            <person name="Umayam L.A."/>
            <person name="White O."/>
            <person name="Salzberg S.L."/>
            <person name="Lewis M.R."/>
            <person name="Radune D."/>
            <person name="Holtzapple E.K."/>
            <person name="Khouri H.M."/>
            <person name="Wolf A.M."/>
            <person name="Utterback T.R."/>
            <person name="Hansen C.L."/>
            <person name="McDonald L.A."/>
            <person name="Feldblyum T.V."/>
            <person name="Angiuoli S.V."/>
            <person name="Dickinson T."/>
            <person name="Hickey E.K."/>
            <person name="Holt I.E."/>
            <person name="Loftus B.J."/>
            <person name="Yang F."/>
            <person name="Smith H.O."/>
            <person name="Venter J.C."/>
            <person name="Dougherty B.A."/>
            <person name="Morrison D.A."/>
            <person name="Hollingshead S.K."/>
            <person name="Fraser C.M."/>
        </authorList>
    </citation>
    <scope>NUCLEOTIDE SEQUENCE [LARGE SCALE GENOMIC DNA]</scope>
    <source>
        <strain>ATCC BAA-334 / TIGR4</strain>
    </source>
</reference>
<evidence type="ECO:0000255" key="1">
    <source>
        <dbReference type="HAMAP-Rule" id="MF_00456"/>
    </source>
</evidence>
<keyword id="KW-0028">Amino-acid biosynthesis</keyword>
<keyword id="KW-0067">ATP-binding</keyword>
<keyword id="KW-0963">Cytoplasm</keyword>
<keyword id="KW-0418">Kinase</keyword>
<keyword id="KW-0547">Nucleotide-binding</keyword>
<keyword id="KW-0641">Proline biosynthesis</keyword>
<keyword id="KW-1185">Reference proteome</keyword>
<keyword id="KW-0808">Transferase</keyword>
<dbReference type="EC" id="2.7.2.11" evidence="1"/>
<dbReference type="EMBL" id="AE005672">
    <property type="protein sequence ID" value="AAK75055.1"/>
    <property type="molecule type" value="Genomic_DNA"/>
</dbReference>
<dbReference type="PIR" id="F95107">
    <property type="entry name" value="F95107"/>
</dbReference>
<dbReference type="RefSeq" id="WP_000875746.1">
    <property type="nucleotide sequence ID" value="NZ_CP155539.1"/>
</dbReference>
<dbReference type="SMR" id="Q97R95"/>
<dbReference type="PaxDb" id="170187-SP_0931"/>
<dbReference type="EnsemblBacteria" id="AAK75055">
    <property type="protein sequence ID" value="AAK75055"/>
    <property type="gene ID" value="SP_0931"/>
</dbReference>
<dbReference type="KEGG" id="spn:SP_0931"/>
<dbReference type="eggNOG" id="COG0263">
    <property type="taxonomic scope" value="Bacteria"/>
</dbReference>
<dbReference type="PhylomeDB" id="Q97R95"/>
<dbReference type="UniPathway" id="UPA00098">
    <property type="reaction ID" value="UER00359"/>
</dbReference>
<dbReference type="Proteomes" id="UP000000585">
    <property type="component" value="Chromosome"/>
</dbReference>
<dbReference type="GO" id="GO:0005829">
    <property type="term" value="C:cytosol"/>
    <property type="evidence" value="ECO:0007669"/>
    <property type="project" value="TreeGrafter"/>
</dbReference>
<dbReference type="GO" id="GO:0005524">
    <property type="term" value="F:ATP binding"/>
    <property type="evidence" value="ECO:0007669"/>
    <property type="project" value="UniProtKB-KW"/>
</dbReference>
<dbReference type="GO" id="GO:0004349">
    <property type="term" value="F:glutamate 5-kinase activity"/>
    <property type="evidence" value="ECO:0007669"/>
    <property type="project" value="UniProtKB-UniRule"/>
</dbReference>
<dbReference type="GO" id="GO:0003723">
    <property type="term" value="F:RNA binding"/>
    <property type="evidence" value="ECO:0007669"/>
    <property type="project" value="InterPro"/>
</dbReference>
<dbReference type="GO" id="GO:0055129">
    <property type="term" value="P:L-proline biosynthetic process"/>
    <property type="evidence" value="ECO:0007669"/>
    <property type="project" value="UniProtKB-UniRule"/>
</dbReference>
<dbReference type="CDD" id="cd04242">
    <property type="entry name" value="AAK_G5K_ProB"/>
    <property type="match status" value="1"/>
</dbReference>
<dbReference type="CDD" id="cd21157">
    <property type="entry name" value="PUA_G5K"/>
    <property type="match status" value="1"/>
</dbReference>
<dbReference type="FunFam" id="2.30.130.10:FF:000011">
    <property type="entry name" value="Glutamate 5-kinase"/>
    <property type="match status" value="1"/>
</dbReference>
<dbReference type="FunFam" id="3.40.1160.10:FF:000018">
    <property type="entry name" value="Glutamate 5-kinase"/>
    <property type="match status" value="1"/>
</dbReference>
<dbReference type="Gene3D" id="3.40.1160.10">
    <property type="entry name" value="Acetylglutamate kinase-like"/>
    <property type="match status" value="1"/>
</dbReference>
<dbReference type="Gene3D" id="2.30.130.10">
    <property type="entry name" value="PUA domain"/>
    <property type="match status" value="1"/>
</dbReference>
<dbReference type="HAMAP" id="MF_00456">
    <property type="entry name" value="ProB"/>
    <property type="match status" value="1"/>
</dbReference>
<dbReference type="InterPro" id="IPR036393">
    <property type="entry name" value="AceGlu_kinase-like_sf"/>
</dbReference>
<dbReference type="InterPro" id="IPR001048">
    <property type="entry name" value="Asp/Glu/Uridylate_kinase"/>
</dbReference>
<dbReference type="InterPro" id="IPR041739">
    <property type="entry name" value="G5K_ProB"/>
</dbReference>
<dbReference type="InterPro" id="IPR001057">
    <property type="entry name" value="Glu/AcGlu_kinase"/>
</dbReference>
<dbReference type="InterPro" id="IPR011529">
    <property type="entry name" value="Glu_5kinase"/>
</dbReference>
<dbReference type="InterPro" id="IPR005715">
    <property type="entry name" value="Glu_5kinase/COase_Synthase"/>
</dbReference>
<dbReference type="InterPro" id="IPR019797">
    <property type="entry name" value="Glutamate_5-kinase_CS"/>
</dbReference>
<dbReference type="InterPro" id="IPR002478">
    <property type="entry name" value="PUA"/>
</dbReference>
<dbReference type="InterPro" id="IPR015947">
    <property type="entry name" value="PUA-like_sf"/>
</dbReference>
<dbReference type="InterPro" id="IPR036974">
    <property type="entry name" value="PUA_sf"/>
</dbReference>
<dbReference type="NCBIfam" id="TIGR01027">
    <property type="entry name" value="proB"/>
    <property type="match status" value="1"/>
</dbReference>
<dbReference type="PANTHER" id="PTHR43654">
    <property type="entry name" value="GLUTAMATE 5-KINASE"/>
    <property type="match status" value="1"/>
</dbReference>
<dbReference type="PANTHER" id="PTHR43654:SF1">
    <property type="entry name" value="ISOPENTENYL PHOSPHATE KINASE"/>
    <property type="match status" value="1"/>
</dbReference>
<dbReference type="Pfam" id="PF00696">
    <property type="entry name" value="AA_kinase"/>
    <property type="match status" value="1"/>
</dbReference>
<dbReference type="Pfam" id="PF01472">
    <property type="entry name" value="PUA"/>
    <property type="match status" value="1"/>
</dbReference>
<dbReference type="PIRSF" id="PIRSF000729">
    <property type="entry name" value="GK"/>
    <property type="match status" value="1"/>
</dbReference>
<dbReference type="PRINTS" id="PR00474">
    <property type="entry name" value="GLU5KINASE"/>
</dbReference>
<dbReference type="SMART" id="SM00359">
    <property type="entry name" value="PUA"/>
    <property type="match status" value="1"/>
</dbReference>
<dbReference type="SUPFAM" id="SSF53633">
    <property type="entry name" value="Carbamate kinase-like"/>
    <property type="match status" value="1"/>
</dbReference>
<dbReference type="SUPFAM" id="SSF88697">
    <property type="entry name" value="PUA domain-like"/>
    <property type="match status" value="1"/>
</dbReference>
<dbReference type="PROSITE" id="PS00902">
    <property type="entry name" value="GLUTAMATE_5_KINASE"/>
    <property type="match status" value="1"/>
</dbReference>
<dbReference type="PROSITE" id="PS50890">
    <property type="entry name" value="PUA"/>
    <property type="match status" value="1"/>
</dbReference>
<organism>
    <name type="scientific">Streptococcus pneumoniae serotype 4 (strain ATCC BAA-334 / TIGR4)</name>
    <dbReference type="NCBI Taxonomy" id="170187"/>
    <lineage>
        <taxon>Bacteria</taxon>
        <taxon>Bacillati</taxon>
        <taxon>Bacillota</taxon>
        <taxon>Bacilli</taxon>
        <taxon>Lactobacillales</taxon>
        <taxon>Streptococcaceae</taxon>
        <taxon>Streptococcus</taxon>
    </lineage>
</organism>
<accession>Q97R95</accession>
<protein>
    <recommendedName>
        <fullName evidence="1">Glutamate 5-kinase</fullName>
        <ecNumber evidence="1">2.7.2.11</ecNumber>
    </recommendedName>
    <alternativeName>
        <fullName evidence="1">Gamma-glutamyl kinase</fullName>
        <shortName evidence="1">GK</shortName>
    </alternativeName>
</protein>
<proteinExistence type="inferred from homology"/>
<gene>
    <name evidence="1" type="primary">proB</name>
    <name type="ordered locus">SP_0931</name>
</gene>